<feature type="chain" id="PRO_0000148461" description="Dihydroorotate dehydrogenase (quinone)">
    <location>
        <begin position="1"/>
        <end position="342"/>
    </location>
</feature>
<feature type="active site" description="Nucleophile" evidence="1">
    <location>
        <position position="173"/>
    </location>
</feature>
<feature type="binding site" evidence="1">
    <location>
        <begin position="60"/>
        <end position="64"/>
    </location>
    <ligand>
        <name>FMN</name>
        <dbReference type="ChEBI" id="CHEBI:58210"/>
    </ligand>
</feature>
<feature type="binding site" evidence="1">
    <location>
        <position position="64"/>
    </location>
    <ligand>
        <name>substrate</name>
    </ligand>
</feature>
<feature type="binding site" evidence="1">
    <location>
        <position position="84"/>
    </location>
    <ligand>
        <name>FMN</name>
        <dbReference type="ChEBI" id="CHEBI:58210"/>
    </ligand>
</feature>
<feature type="binding site" evidence="1">
    <location>
        <begin position="109"/>
        <end position="113"/>
    </location>
    <ligand>
        <name>substrate</name>
    </ligand>
</feature>
<feature type="binding site" evidence="1">
    <location>
        <position position="137"/>
    </location>
    <ligand>
        <name>FMN</name>
        <dbReference type="ChEBI" id="CHEBI:58210"/>
    </ligand>
</feature>
<feature type="binding site" evidence="1">
    <location>
        <position position="170"/>
    </location>
    <ligand>
        <name>FMN</name>
        <dbReference type="ChEBI" id="CHEBI:58210"/>
    </ligand>
</feature>
<feature type="binding site" evidence="1">
    <location>
        <position position="170"/>
    </location>
    <ligand>
        <name>substrate</name>
    </ligand>
</feature>
<feature type="binding site" evidence="1">
    <location>
        <position position="175"/>
    </location>
    <ligand>
        <name>substrate</name>
    </ligand>
</feature>
<feature type="binding site" evidence="1">
    <location>
        <position position="215"/>
    </location>
    <ligand>
        <name>FMN</name>
        <dbReference type="ChEBI" id="CHEBI:58210"/>
    </ligand>
</feature>
<feature type="binding site" evidence="1">
    <location>
        <position position="243"/>
    </location>
    <ligand>
        <name>FMN</name>
        <dbReference type="ChEBI" id="CHEBI:58210"/>
    </ligand>
</feature>
<feature type="binding site" evidence="1">
    <location>
        <begin position="244"/>
        <end position="245"/>
    </location>
    <ligand>
        <name>substrate</name>
    </ligand>
</feature>
<feature type="binding site" evidence="1">
    <location>
        <position position="266"/>
    </location>
    <ligand>
        <name>FMN</name>
        <dbReference type="ChEBI" id="CHEBI:58210"/>
    </ligand>
</feature>
<feature type="binding site" evidence="1">
    <location>
        <position position="295"/>
    </location>
    <ligand>
        <name>FMN</name>
        <dbReference type="ChEBI" id="CHEBI:58210"/>
    </ligand>
</feature>
<feature type="binding site" evidence="1">
    <location>
        <begin position="316"/>
        <end position="317"/>
    </location>
    <ligand>
        <name>FMN</name>
        <dbReference type="ChEBI" id="CHEBI:58210"/>
    </ligand>
</feature>
<name>PYRD_NITEU</name>
<evidence type="ECO:0000255" key="1">
    <source>
        <dbReference type="HAMAP-Rule" id="MF_00225"/>
    </source>
</evidence>
<organism>
    <name type="scientific">Nitrosomonas europaea (strain ATCC 19718 / CIP 103999 / KCTC 2705 / NBRC 14298)</name>
    <dbReference type="NCBI Taxonomy" id="228410"/>
    <lineage>
        <taxon>Bacteria</taxon>
        <taxon>Pseudomonadati</taxon>
        <taxon>Pseudomonadota</taxon>
        <taxon>Betaproteobacteria</taxon>
        <taxon>Nitrosomonadales</taxon>
        <taxon>Nitrosomonadaceae</taxon>
        <taxon>Nitrosomonas</taxon>
    </lineage>
</organism>
<sequence length="342" mass="37229">MMYNLLRPLLFLLDPETAHTVTLDTLNLLKRTGLLPDRTIDCTPVRVMELDFPNPVGLAAGLDKNGTCISALASLGFGFIEVGTITPRPQVGNPRPRLFRIPQAEAIINRMGFNNVGVDKLIENVQQSGYRGILGINIGKNADTPLQNAIDDYLICLRKVYLHASYVTVNISSPNTQQLRQLQNETELEHLLGALKAEQTRLSDLHGRYTPLAIKIAPDLESEQITVIASLLMKHRMDAVIATNTTTAREGVEHLPRGNEKGGLSGAPLTERSTTVIRQLANHLQHAIPIIGAGGIMSARDAQLKIEAGASLVQIYSGLIYRGPDLVTKTVSLLCSRTTHAG</sequence>
<keyword id="KW-1003">Cell membrane</keyword>
<keyword id="KW-0285">Flavoprotein</keyword>
<keyword id="KW-0288">FMN</keyword>
<keyword id="KW-0472">Membrane</keyword>
<keyword id="KW-0560">Oxidoreductase</keyword>
<keyword id="KW-0665">Pyrimidine biosynthesis</keyword>
<keyword id="KW-1185">Reference proteome</keyword>
<proteinExistence type="inferred from homology"/>
<reference key="1">
    <citation type="journal article" date="2003" name="J. Bacteriol.">
        <title>Complete genome sequence of the ammonia-oxidizing bacterium and obligate chemolithoautotroph Nitrosomonas europaea.</title>
        <authorList>
            <person name="Chain P."/>
            <person name="Lamerdin J.E."/>
            <person name="Larimer F.W."/>
            <person name="Regala W."/>
            <person name="Lao V."/>
            <person name="Land M.L."/>
            <person name="Hauser L."/>
            <person name="Hooper A.B."/>
            <person name="Klotz M.G."/>
            <person name="Norton J."/>
            <person name="Sayavedra-Soto L.A."/>
            <person name="Arciero D.M."/>
            <person name="Hommes N.G."/>
            <person name="Whittaker M.M."/>
            <person name="Arp D.J."/>
        </authorList>
    </citation>
    <scope>NUCLEOTIDE SEQUENCE [LARGE SCALE GENOMIC DNA]</scope>
    <source>
        <strain>ATCC 19718 / CIP 103999 / KCTC 2705 / NBRC 14298</strain>
    </source>
</reference>
<dbReference type="EC" id="1.3.5.2" evidence="1"/>
<dbReference type="EMBL" id="AL954747">
    <property type="protein sequence ID" value="CAD86133.1"/>
    <property type="molecule type" value="Genomic_DNA"/>
</dbReference>
<dbReference type="RefSeq" id="WP_011112714.1">
    <property type="nucleotide sequence ID" value="NC_004757.1"/>
</dbReference>
<dbReference type="SMR" id="Q82ST3"/>
<dbReference type="STRING" id="228410.NE2221"/>
<dbReference type="GeneID" id="87105356"/>
<dbReference type="KEGG" id="neu:NE2221"/>
<dbReference type="eggNOG" id="COG0167">
    <property type="taxonomic scope" value="Bacteria"/>
</dbReference>
<dbReference type="HOGENOM" id="CLU_013640_2_0_4"/>
<dbReference type="OrthoDB" id="9802377at2"/>
<dbReference type="PhylomeDB" id="Q82ST3"/>
<dbReference type="UniPathway" id="UPA00070">
    <property type="reaction ID" value="UER00946"/>
</dbReference>
<dbReference type="Proteomes" id="UP000001416">
    <property type="component" value="Chromosome"/>
</dbReference>
<dbReference type="GO" id="GO:0005737">
    <property type="term" value="C:cytoplasm"/>
    <property type="evidence" value="ECO:0007669"/>
    <property type="project" value="InterPro"/>
</dbReference>
<dbReference type="GO" id="GO:0005886">
    <property type="term" value="C:plasma membrane"/>
    <property type="evidence" value="ECO:0007669"/>
    <property type="project" value="UniProtKB-SubCell"/>
</dbReference>
<dbReference type="GO" id="GO:0106430">
    <property type="term" value="F:dihydroorotate dehydrogenase (quinone) activity"/>
    <property type="evidence" value="ECO:0007669"/>
    <property type="project" value="UniProtKB-EC"/>
</dbReference>
<dbReference type="GO" id="GO:0006207">
    <property type="term" value="P:'de novo' pyrimidine nucleobase biosynthetic process"/>
    <property type="evidence" value="ECO:0007669"/>
    <property type="project" value="InterPro"/>
</dbReference>
<dbReference type="GO" id="GO:0044205">
    <property type="term" value="P:'de novo' UMP biosynthetic process"/>
    <property type="evidence" value="ECO:0007669"/>
    <property type="project" value="UniProtKB-UniRule"/>
</dbReference>
<dbReference type="CDD" id="cd04738">
    <property type="entry name" value="DHOD_2_like"/>
    <property type="match status" value="1"/>
</dbReference>
<dbReference type="FunFam" id="3.20.20.70:FF:000028">
    <property type="entry name" value="Dihydroorotate dehydrogenase (quinone)"/>
    <property type="match status" value="1"/>
</dbReference>
<dbReference type="Gene3D" id="3.20.20.70">
    <property type="entry name" value="Aldolase class I"/>
    <property type="match status" value="1"/>
</dbReference>
<dbReference type="HAMAP" id="MF_00225">
    <property type="entry name" value="DHO_dh_type2"/>
    <property type="match status" value="1"/>
</dbReference>
<dbReference type="InterPro" id="IPR013785">
    <property type="entry name" value="Aldolase_TIM"/>
</dbReference>
<dbReference type="InterPro" id="IPR050074">
    <property type="entry name" value="DHO_dehydrogenase"/>
</dbReference>
<dbReference type="InterPro" id="IPR012135">
    <property type="entry name" value="Dihydroorotate_DH_1_2"/>
</dbReference>
<dbReference type="InterPro" id="IPR005719">
    <property type="entry name" value="Dihydroorotate_DH_2"/>
</dbReference>
<dbReference type="InterPro" id="IPR005720">
    <property type="entry name" value="Dihydroorotate_DH_cat"/>
</dbReference>
<dbReference type="InterPro" id="IPR001295">
    <property type="entry name" value="Dihydroorotate_DH_CS"/>
</dbReference>
<dbReference type="NCBIfam" id="NF003644">
    <property type="entry name" value="PRK05286.1-1"/>
    <property type="match status" value="1"/>
</dbReference>
<dbReference type="NCBIfam" id="NF003645">
    <property type="entry name" value="PRK05286.1-2"/>
    <property type="match status" value="1"/>
</dbReference>
<dbReference type="NCBIfam" id="NF003646">
    <property type="entry name" value="PRK05286.1-4"/>
    <property type="match status" value="1"/>
</dbReference>
<dbReference type="NCBIfam" id="NF003652">
    <property type="entry name" value="PRK05286.2-5"/>
    <property type="match status" value="1"/>
</dbReference>
<dbReference type="NCBIfam" id="TIGR01036">
    <property type="entry name" value="pyrD_sub2"/>
    <property type="match status" value="1"/>
</dbReference>
<dbReference type="PANTHER" id="PTHR48109:SF4">
    <property type="entry name" value="DIHYDROOROTATE DEHYDROGENASE (QUINONE), MITOCHONDRIAL"/>
    <property type="match status" value="1"/>
</dbReference>
<dbReference type="PANTHER" id="PTHR48109">
    <property type="entry name" value="DIHYDROOROTATE DEHYDROGENASE (QUINONE), MITOCHONDRIAL-RELATED"/>
    <property type="match status" value="1"/>
</dbReference>
<dbReference type="Pfam" id="PF01180">
    <property type="entry name" value="DHO_dh"/>
    <property type="match status" value="1"/>
</dbReference>
<dbReference type="PIRSF" id="PIRSF000164">
    <property type="entry name" value="DHO_oxidase"/>
    <property type="match status" value="1"/>
</dbReference>
<dbReference type="SUPFAM" id="SSF51395">
    <property type="entry name" value="FMN-linked oxidoreductases"/>
    <property type="match status" value="1"/>
</dbReference>
<dbReference type="PROSITE" id="PS00911">
    <property type="entry name" value="DHODEHASE_1"/>
    <property type="match status" value="1"/>
</dbReference>
<dbReference type="PROSITE" id="PS00912">
    <property type="entry name" value="DHODEHASE_2"/>
    <property type="match status" value="1"/>
</dbReference>
<accession>Q82ST3</accession>
<protein>
    <recommendedName>
        <fullName evidence="1">Dihydroorotate dehydrogenase (quinone)</fullName>
        <ecNumber evidence="1">1.3.5.2</ecNumber>
    </recommendedName>
    <alternativeName>
        <fullName evidence="1">DHOdehase</fullName>
        <shortName evidence="1">DHOD</shortName>
        <shortName evidence="1">DHODase</shortName>
    </alternativeName>
    <alternativeName>
        <fullName evidence="1">Dihydroorotate oxidase</fullName>
    </alternativeName>
</protein>
<comment type="function">
    <text evidence="1">Catalyzes the conversion of dihydroorotate to orotate with quinone as electron acceptor.</text>
</comment>
<comment type="catalytic activity">
    <reaction evidence="1">
        <text>(S)-dihydroorotate + a quinone = orotate + a quinol</text>
        <dbReference type="Rhea" id="RHEA:30187"/>
        <dbReference type="ChEBI" id="CHEBI:24646"/>
        <dbReference type="ChEBI" id="CHEBI:30839"/>
        <dbReference type="ChEBI" id="CHEBI:30864"/>
        <dbReference type="ChEBI" id="CHEBI:132124"/>
        <dbReference type="EC" id="1.3.5.2"/>
    </reaction>
</comment>
<comment type="cofactor">
    <cofactor evidence="1">
        <name>FMN</name>
        <dbReference type="ChEBI" id="CHEBI:58210"/>
    </cofactor>
    <text evidence="1">Binds 1 FMN per subunit.</text>
</comment>
<comment type="pathway">
    <text evidence="1">Pyrimidine metabolism; UMP biosynthesis via de novo pathway; orotate from (S)-dihydroorotate (quinone route): step 1/1.</text>
</comment>
<comment type="subunit">
    <text evidence="1">Monomer.</text>
</comment>
<comment type="subcellular location">
    <subcellularLocation>
        <location evidence="1">Cell membrane</location>
        <topology evidence="1">Peripheral membrane protein</topology>
    </subcellularLocation>
</comment>
<comment type="similarity">
    <text evidence="1">Belongs to the dihydroorotate dehydrogenase family. Type 2 subfamily.</text>
</comment>
<gene>
    <name evidence="1" type="primary">pyrD</name>
    <name type="ordered locus">NE2221</name>
</gene>